<keyword id="KW-0489">Methyltransferase</keyword>
<keyword id="KW-1185">Reference proteome</keyword>
<keyword id="KW-0808">Transferase</keyword>
<evidence type="ECO:0000305" key="1"/>
<comment type="similarity">
    <text evidence="1">Belongs to the methyltransferase superfamily.</text>
</comment>
<gene>
    <name type="ordered locus">sll0829</name>
</gene>
<accession>Q55423</accession>
<dbReference type="EC" id="2.1.1.-"/>
<dbReference type="EMBL" id="BA000022">
    <property type="protein sequence ID" value="BAA10522.1"/>
    <property type="molecule type" value="Genomic_DNA"/>
</dbReference>
<dbReference type="PIR" id="S75787">
    <property type="entry name" value="S75787"/>
</dbReference>
<dbReference type="SMR" id="Q55423"/>
<dbReference type="STRING" id="1148.gene:10500026"/>
<dbReference type="PaxDb" id="1148-1001276"/>
<dbReference type="EnsemblBacteria" id="BAA10522">
    <property type="protein sequence ID" value="BAA10522"/>
    <property type="gene ID" value="BAA10522"/>
</dbReference>
<dbReference type="KEGG" id="syn:sll0829"/>
<dbReference type="eggNOG" id="COG2226">
    <property type="taxonomic scope" value="Bacteria"/>
</dbReference>
<dbReference type="InParanoid" id="Q55423"/>
<dbReference type="PhylomeDB" id="Q55423"/>
<dbReference type="Proteomes" id="UP000001425">
    <property type="component" value="Chromosome"/>
</dbReference>
<dbReference type="GO" id="GO:0008168">
    <property type="term" value="F:methyltransferase activity"/>
    <property type="evidence" value="ECO:0000318"/>
    <property type="project" value="GO_Central"/>
</dbReference>
<dbReference type="GO" id="GO:0032259">
    <property type="term" value="P:methylation"/>
    <property type="evidence" value="ECO:0007669"/>
    <property type="project" value="UniProtKB-KW"/>
</dbReference>
<dbReference type="CDD" id="cd02440">
    <property type="entry name" value="AdoMet_MTases"/>
    <property type="match status" value="1"/>
</dbReference>
<dbReference type="Gene3D" id="3.40.50.150">
    <property type="entry name" value="Vaccinia Virus protein VP39"/>
    <property type="match status" value="1"/>
</dbReference>
<dbReference type="InterPro" id="IPR041698">
    <property type="entry name" value="Methyltransf_25"/>
</dbReference>
<dbReference type="InterPro" id="IPR050508">
    <property type="entry name" value="Methyltransf_Superfamily"/>
</dbReference>
<dbReference type="InterPro" id="IPR029063">
    <property type="entry name" value="SAM-dependent_MTases_sf"/>
</dbReference>
<dbReference type="PANTHER" id="PTHR42912">
    <property type="entry name" value="METHYLTRANSFERASE"/>
    <property type="match status" value="1"/>
</dbReference>
<dbReference type="PANTHER" id="PTHR42912:SF93">
    <property type="entry name" value="N6-ADENOSINE-METHYLTRANSFERASE TMT1A"/>
    <property type="match status" value="1"/>
</dbReference>
<dbReference type="Pfam" id="PF13649">
    <property type="entry name" value="Methyltransf_25"/>
    <property type="match status" value="1"/>
</dbReference>
<dbReference type="SUPFAM" id="SSF53335">
    <property type="entry name" value="S-adenosyl-L-methionine-dependent methyltransferases"/>
    <property type="match status" value="1"/>
</dbReference>
<sequence length="212" mass="23072">MATIFRTWSYQYPWVYALVSRLATLNVGGEERFHQLPLENLAISPGQKVLDLCCGGGQATVYLAQSGATVVGLDASPKALGRAKINVPQATYVQGLAEDLPFGEGEFDLVHTSVALHEMTPAQLQSIISGVHRVLKPGGIFALVDLHRPSNWLFWPPLAIFMGLFETETAWQLINTDLGSLLDQAGFTVVRKHLYAGGSLQVIQARANKTVN</sequence>
<reference key="1">
    <citation type="journal article" date="1995" name="DNA Res.">
        <title>Sequence analysis of the genome of the unicellular cyanobacterium Synechocystis sp. strain PCC6803. I. Sequence features in the 1 Mb region from map positions 64% to 92% of the genome.</title>
        <authorList>
            <person name="Kaneko T."/>
            <person name="Tanaka A."/>
            <person name="Sato S."/>
            <person name="Kotani H."/>
            <person name="Sazuka T."/>
            <person name="Miyajima N."/>
            <person name="Sugiura M."/>
            <person name="Tabata S."/>
        </authorList>
    </citation>
    <scope>NUCLEOTIDE SEQUENCE [LARGE SCALE GENOMIC DNA]</scope>
    <source>
        <strain>ATCC 27184 / PCC 6803 / N-1</strain>
    </source>
</reference>
<reference key="2">
    <citation type="journal article" date="1996" name="DNA Res.">
        <title>Sequence analysis of the genome of the unicellular cyanobacterium Synechocystis sp. strain PCC6803. II. Sequence determination of the entire genome and assignment of potential protein-coding regions.</title>
        <authorList>
            <person name="Kaneko T."/>
            <person name="Sato S."/>
            <person name="Kotani H."/>
            <person name="Tanaka A."/>
            <person name="Asamizu E."/>
            <person name="Nakamura Y."/>
            <person name="Miyajima N."/>
            <person name="Hirosawa M."/>
            <person name="Sugiura M."/>
            <person name="Sasamoto S."/>
            <person name="Kimura T."/>
            <person name="Hosouchi T."/>
            <person name="Matsuno A."/>
            <person name="Muraki A."/>
            <person name="Nakazaki N."/>
            <person name="Naruo K."/>
            <person name="Okumura S."/>
            <person name="Shimpo S."/>
            <person name="Takeuchi C."/>
            <person name="Wada T."/>
            <person name="Watanabe A."/>
            <person name="Yamada M."/>
            <person name="Yasuda M."/>
            <person name="Tabata S."/>
        </authorList>
    </citation>
    <scope>NUCLEOTIDE SEQUENCE [LARGE SCALE GENOMIC DNA]</scope>
    <source>
        <strain>ATCC 27184 / PCC 6803 / Kazusa</strain>
    </source>
</reference>
<feature type="chain" id="PRO_0000204446" description="Uncharacterized methyltransferase sll0829">
    <location>
        <begin position="1"/>
        <end position="212"/>
    </location>
</feature>
<organism>
    <name type="scientific">Synechocystis sp. (strain ATCC 27184 / PCC 6803 / Kazusa)</name>
    <dbReference type="NCBI Taxonomy" id="1111708"/>
    <lineage>
        <taxon>Bacteria</taxon>
        <taxon>Bacillati</taxon>
        <taxon>Cyanobacteriota</taxon>
        <taxon>Cyanophyceae</taxon>
        <taxon>Synechococcales</taxon>
        <taxon>Merismopediaceae</taxon>
        <taxon>Synechocystis</taxon>
    </lineage>
</organism>
<name>Y829_SYNY3</name>
<proteinExistence type="inferred from homology"/>
<protein>
    <recommendedName>
        <fullName>Uncharacterized methyltransferase sll0829</fullName>
        <ecNumber>2.1.1.-</ecNumber>
    </recommendedName>
</protein>